<organism>
    <name type="scientific">Salmonella newport (strain SL254)</name>
    <dbReference type="NCBI Taxonomy" id="423368"/>
    <lineage>
        <taxon>Bacteria</taxon>
        <taxon>Pseudomonadati</taxon>
        <taxon>Pseudomonadota</taxon>
        <taxon>Gammaproteobacteria</taxon>
        <taxon>Enterobacterales</taxon>
        <taxon>Enterobacteriaceae</taxon>
        <taxon>Salmonella</taxon>
    </lineage>
</organism>
<feature type="chain" id="PRO_1000097103" description="Pantothenate synthetase">
    <location>
        <begin position="1"/>
        <end position="284"/>
    </location>
</feature>
<feature type="active site" description="Proton donor" evidence="1">
    <location>
        <position position="37"/>
    </location>
</feature>
<feature type="binding site" evidence="1">
    <location>
        <begin position="30"/>
        <end position="37"/>
    </location>
    <ligand>
        <name>ATP</name>
        <dbReference type="ChEBI" id="CHEBI:30616"/>
    </ligand>
</feature>
<feature type="binding site" evidence="1">
    <location>
        <position position="61"/>
    </location>
    <ligand>
        <name>(R)-pantoate</name>
        <dbReference type="ChEBI" id="CHEBI:15980"/>
    </ligand>
</feature>
<feature type="binding site" evidence="1">
    <location>
        <position position="61"/>
    </location>
    <ligand>
        <name>beta-alanine</name>
        <dbReference type="ChEBI" id="CHEBI:57966"/>
    </ligand>
</feature>
<feature type="binding site" evidence="1">
    <location>
        <begin position="149"/>
        <end position="152"/>
    </location>
    <ligand>
        <name>ATP</name>
        <dbReference type="ChEBI" id="CHEBI:30616"/>
    </ligand>
</feature>
<feature type="binding site" evidence="1">
    <location>
        <position position="155"/>
    </location>
    <ligand>
        <name>(R)-pantoate</name>
        <dbReference type="ChEBI" id="CHEBI:15980"/>
    </ligand>
</feature>
<feature type="binding site" evidence="1">
    <location>
        <position position="178"/>
    </location>
    <ligand>
        <name>ATP</name>
        <dbReference type="ChEBI" id="CHEBI:30616"/>
    </ligand>
</feature>
<feature type="binding site" evidence="1">
    <location>
        <begin position="186"/>
        <end position="189"/>
    </location>
    <ligand>
        <name>ATP</name>
        <dbReference type="ChEBI" id="CHEBI:30616"/>
    </ligand>
</feature>
<dbReference type="EC" id="6.3.2.1" evidence="1"/>
<dbReference type="EMBL" id="CP001113">
    <property type="protein sequence ID" value="ACF61789.1"/>
    <property type="molecule type" value="Genomic_DNA"/>
</dbReference>
<dbReference type="RefSeq" id="WP_000905343.1">
    <property type="nucleotide sequence ID" value="NZ_CCMR01000003.1"/>
</dbReference>
<dbReference type="SMR" id="B4SUA7"/>
<dbReference type="KEGG" id="see:SNSL254_A0198"/>
<dbReference type="HOGENOM" id="CLU_047148_0_0_6"/>
<dbReference type="UniPathway" id="UPA00028">
    <property type="reaction ID" value="UER00005"/>
</dbReference>
<dbReference type="Proteomes" id="UP000008824">
    <property type="component" value="Chromosome"/>
</dbReference>
<dbReference type="GO" id="GO:0005829">
    <property type="term" value="C:cytosol"/>
    <property type="evidence" value="ECO:0007669"/>
    <property type="project" value="TreeGrafter"/>
</dbReference>
<dbReference type="GO" id="GO:0005524">
    <property type="term" value="F:ATP binding"/>
    <property type="evidence" value="ECO:0007669"/>
    <property type="project" value="UniProtKB-KW"/>
</dbReference>
<dbReference type="GO" id="GO:0004592">
    <property type="term" value="F:pantoate-beta-alanine ligase activity"/>
    <property type="evidence" value="ECO:0007669"/>
    <property type="project" value="UniProtKB-UniRule"/>
</dbReference>
<dbReference type="GO" id="GO:0015940">
    <property type="term" value="P:pantothenate biosynthetic process"/>
    <property type="evidence" value="ECO:0007669"/>
    <property type="project" value="UniProtKB-UniRule"/>
</dbReference>
<dbReference type="CDD" id="cd00560">
    <property type="entry name" value="PanC"/>
    <property type="match status" value="1"/>
</dbReference>
<dbReference type="FunFam" id="3.30.1300.10:FF:000001">
    <property type="entry name" value="Pantothenate synthetase"/>
    <property type="match status" value="1"/>
</dbReference>
<dbReference type="FunFam" id="3.40.50.620:FF:000013">
    <property type="entry name" value="Pantothenate synthetase"/>
    <property type="match status" value="1"/>
</dbReference>
<dbReference type="Gene3D" id="3.40.50.620">
    <property type="entry name" value="HUPs"/>
    <property type="match status" value="1"/>
</dbReference>
<dbReference type="Gene3D" id="3.30.1300.10">
    <property type="entry name" value="Pantoate-beta-alanine ligase, C-terminal domain"/>
    <property type="match status" value="1"/>
</dbReference>
<dbReference type="HAMAP" id="MF_00158">
    <property type="entry name" value="PanC"/>
    <property type="match status" value="1"/>
</dbReference>
<dbReference type="InterPro" id="IPR004821">
    <property type="entry name" value="Cyt_trans-like"/>
</dbReference>
<dbReference type="InterPro" id="IPR003721">
    <property type="entry name" value="Pantoate_ligase"/>
</dbReference>
<dbReference type="InterPro" id="IPR042176">
    <property type="entry name" value="Pantoate_ligase_C"/>
</dbReference>
<dbReference type="InterPro" id="IPR014729">
    <property type="entry name" value="Rossmann-like_a/b/a_fold"/>
</dbReference>
<dbReference type="NCBIfam" id="TIGR00125">
    <property type="entry name" value="cyt_tran_rel"/>
    <property type="match status" value="1"/>
</dbReference>
<dbReference type="NCBIfam" id="TIGR00018">
    <property type="entry name" value="panC"/>
    <property type="match status" value="1"/>
</dbReference>
<dbReference type="PANTHER" id="PTHR21299">
    <property type="entry name" value="CYTIDYLATE KINASE/PANTOATE-BETA-ALANINE LIGASE"/>
    <property type="match status" value="1"/>
</dbReference>
<dbReference type="PANTHER" id="PTHR21299:SF1">
    <property type="entry name" value="PANTOATE--BETA-ALANINE LIGASE"/>
    <property type="match status" value="1"/>
</dbReference>
<dbReference type="Pfam" id="PF02569">
    <property type="entry name" value="Pantoate_ligase"/>
    <property type="match status" value="1"/>
</dbReference>
<dbReference type="SUPFAM" id="SSF52374">
    <property type="entry name" value="Nucleotidylyl transferase"/>
    <property type="match status" value="1"/>
</dbReference>
<reference key="1">
    <citation type="journal article" date="2011" name="J. Bacteriol.">
        <title>Comparative genomics of 28 Salmonella enterica isolates: evidence for CRISPR-mediated adaptive sublineage evolution.</title>
        <authorList>
            <person name="Fricke W.F."/>
            <person name="Mammel M.K."/>
            <person name="McDermott P.F."/>
            <person name="Tartera C."/>
            <person name="White D.G."/>
            <person name="Leclerc J.E."/>
            <person name="Ravel J."/>
            <person name="Cebula T.A."/>
        </authorList>
    </citation>
    <scope>NUCLEOTIDE SEQUENCE [LARGE SCALE GENOMIC DNA]</scope>
    <source>
        <strain>SL254</strain>
    </source>
</reference>
<comment type="function">
    <text evidence="1">Catalyzes the condensation of pantoate with beta-alanine in an ATP-dependent reaction via a pantoyl-adenylate intermediate.</text>
</comment>
<comment type="catalytic activity">
    <reaction evidence="1">
        <text>(R)-pantoate + beta-alanine + ATP = (R)-pantothenate + AMP + diphosphate + H(+)</text>
        <dbReference type="Rhea" id="RHEA:10912"/>
        <dbReference type="ChEBI" id="CHEBI:15378"/>
        <dbReference type="ChEBI" id="CHEBI:15980"/>
        <dbReference type="ChEBI" id="CHEBI:29032"/>
        <dbReference type="ChEBI" id="CHEBI:30616"/>
        <dbReference type="ChEBI" id="CHEBI:33019"/>
        <dbReference type="ChEBI" id="CHEBI:57966"/>
        <dbReference type="ChEBI" id="CHEBI:456215"/>
        <dbReference type="EC" id="6.3.2.1"/>
    </reaction>
</comment>
<comment type="pathway">
    <text evidence="1">Cofactor biosynthesis; (R)-pantothenate biosynthesis; (R)-pantothenate from (R)-pantoate and beta-alanine: step 1/1.</text>
</comment>
<comment type="subunit">
    <text evidence="1">Homodimer.</text>
</comment>
<comment type="subcellular location">
    <subcellularLocation>
        <location evidence="1">Cytoplasm</location>
    </subcellularLocation>
</comment>
<comment type="miscellaneous">
    <text evidence="1">The reaction proceeds by a bi uni uni bi ping pong mechanism.</text>
</comment>
<comment type="similarity">
    <text evidence="1">Belongs to the pantothenate synthetase family.</text>
</comment>
<gene>
    <name evidence="1" type="primary">panC</name>
    <name type="ordered locus">SNSL254_A0198</name>
</gene>
<accession>B4SUA7</accession>
<evidence type="ECO:0000255" key="1">
    <source>
        <dbReference type="HAMAP-Rule" id="MF_00158"/>
    </source>
</evidence>
<proteinExistence type="inferred from homology"/>
<name>PANC_SALNS</name>
<sequence length="284" mass="31927">MLIIETLPLLRQHIRRLRQEGKRVALVPTMGNLHDGHMKLVDEAKARADVVIVSIFVNPMQFDRPDDLVRYPRTLQEDCEKLNKRKVDYVFAPAVEEIYPHGLEGQTYVDVPGLSTMLEGASRPGHFRGVSTIVSKLFNLIQPDIACFGEKDFQQLALIRKMVADMSYDIEIVGVPIIRAKDGLALSSRNAYLTAEQRKIAPGLYNVMNRIAEKLIAGNRELQEIIAIAEQELNEKGFRADDIQIRDADTLLELTETSKRAVILAAAWLGQARLIDNQSVTLAQ</sequence>
<keyword id="KW-0067">ATP-binding</keyword>
<keyword id="KW-0963">Cytoplasm</keyword>
<keyword id="KW-0436">Ligase</keyword>
<keyword id="KW-0547">Nucleotide-binding</keyword>
<keyword id="KW-0566">Pantothenate biosynthesis</keyword>
<protein>
    <recommendedName>
        <fullName evidence="1">Pantothenate synthetase</fullName>
        <shortName evidence="1">PS</shortName>
        <ecNumber evidence="1">6.3.2.1</ecNumber>
    </recommendedName>
    <alternativeName>
        <fullName evidence="1">Pantoate--beta-alanine ligase</fullName>
    </alternativeName>
    <alternativeName>
        <fullName evidence="1">Pantoate-activating enzyme</fullName>
    </alternativeName>
</protein>